<organism>
    <name type="scientific">Bombina maxima</name>
    <name type="common">Giant fire-bellied toad</name>
    <name type="synonym">Chinese red belly toad</name>
    <dbReference type="NCBI Taxonomy" id="161274"/>
    <lineage>
        <taxon>Eukaryota</taxon>
        <taxon>Metazoa</taxon>
        <taxon>Chordata</taxon>
        <taxon>Craniata</taxon>
        <taxon>Vertebrata</taxon>
        <taxon>Euteleostomi</taxon>
        <taxon>Amphibia</taxon>
        <taxon>Batrachia</taxon>
        <taxon>Anura</taxon>
        <taxon>Bombinatoridae</taxon>
        <taxon>Bombina</taxon>
    </lineage>
</organism>
<name>M5H42_BOMMX</name>
<comment type="function">
    <text>Maximin-5 shows antibacterial activity against both Gram-positive and Gram-negative bacteria. The only exception is the resistance of E.coli. Also shows antimicrobial activity against fungi C.albicans, A.flavus and P.uticale. It has little hemolytic activity. It does not possess a significant cytotoxicity against tumor cell lines. It does not possess a significant anti-HIV activity.</text>
</comment>
<comment type="function">
    <text>Maximin-H4 shows antibacterial activity against both Gram-positive and Gram-negative bacteria. It also shows antimicrobial activity against the fungus C.albicans. Shows strong hemolytic activity.</text>
</comment>
<comment type="subcellular location">
    <subcellularLocation>
        <location evidence="4">Secreted</location>
    </subcellularLocation>
</comment>
<comment type="tissue specificity">
    <text evidence="4">Expressed by the skin glands.</text>
</comment>
<comment type="mass spectrometry">
    <molecule>Maximin-H4</molecule>
</comment>
<comment type="similarity">
    <text evidence="5">Belongs to the bombinin family.</text>
</comment>
<dbReference type="EMBL" id="AY849000">
    <property type="protein sequence ID" value="AAX50221.1"/>
    <property type="molecule type" value="mRNA"/>
</dbReference>
<dbReference type="EMBL" id="AY849007">
    <property type="protein sequence ID" value="AAX50228.1"/>
    <property type="molecule type" value="mRNA"/>
</dbReference>
<dbReference type="EMBL" id="AY848985">
    <property type="protein sequence ID" value="AAX50206.1"/>
    <property type="molecule type" value="mRNA"/>
</dbReference>
<dbReference type="SMR" id="Q58T60"/>
<dbReference type="GO" id="GO:0005576">
    <property type="term" value="C:extracellular region"/>
    <property type="evidence" value="ECO:0007669"/>
    <property type="project" value="UniProtKB-SubCell"/>
</dbReference>
<dbReference type="GO" id="GO:0042742">
    <property type="term" value="P:defense response to bacterium"/>
    <property type="evidence" value="ECO:0007669"/>
    <property type="project" value="UniProtKB-KW"/>
</dbReference>
<dbReference type="GO" id="GO:0050832">
    <property type="term" value="P:defense response to fungus"/>
    <property type="evidence" value="ECO:0007669"/>
    <property type="project" value="UniProtKB-KW"/>
</dbReference>
<dbReference type="GO" id="GO:0031640">
    <property type="term" value="P:killing of cells of another organism"/>
    <property type="evidence" value="ECO:0007669"/>
    <property type="project" value="UniProtKB-KW"/>
</dbReference>
<dbReference type="InterPro" id="IPR007962">
    <property type="entry name" value="Bombinin"/>
</dbReference>
<dbReference type="Pfam" id="PF05298">
    <property type="entry name" value="Bombinin"/>
    <property type="match status" value="1"/>
</dbReference>
<proteinExistence type="evidence at protein level"/>
<evidence type="ECO:0000255" key="1"/>
<evidence type="ECO:0000269" key="2">
    <source>
    </source>
</evidence>
<evidence type="ECO:0000269" key="3">
    <source>
    </source>
</evidence>
<evidence type="ECO:0000269" key="4">
    <source ref="2"/>
</evidence>
<evidence type="ECO:0000305" key="5"/>
<sequence>MNFKYIVAVSFLIASAYARSVQNDEQSLSQRDVLEEESLREIRSIGAKILGGVKTFFKGALKELASTYLQQKRTAEEQHEVMKRLEAVMRDLDSLDHPEEASERETRGFNQEEIANLFTKKEKRILGPVISKIGGVLGGLLKNLG</sequence>
<keyword id="KW-0027">Amidation</keyword>
<keyword id="KW-0878">Amphibian defense peptide</keyword>
<keyword id="KW-0044">Antibiotic</keyword>
<keyword id="KW-0929">Antimicrobial</keyword>
<keyword id="KW-0165">Cleavage on pair of basic residues</keyword>
<keyword id="KW-0204">Cytolysis</keyword>
<keyword id="KW-0903">Direct protein sequencing</keyword>
<keyword id="KW-0295">Fungicide</keyword>
<keyword id="KW-0354">Hemolysis</keyword>
<keyword id="KW-0964">Secreted</keyword>
<keyword id="KW-0732">Signal</keyword>
<protein>
    <recommendedName>
        <fullName>Maximins 5/H4 type 2</fullName>
    </recommendedName>
    <component>
        <recommendedName>
            <fullName>Maximin-5</fullName>
        </recommendedName>
    </component>
    <component>
        <recommendedName>
            <fullName>Maximin-H4</fullName>
        </recommendedName>
    </component>
</protein>
<feature type="signal peptide" evidence="1">
    <location>
        <begin position="1"/>
        <end position="18"/>
    </location>
</feature>
<feature type="propeptide" id="PRO_0000003184" evidence="4">
    <location>
        <begin position="19"/>
        <end position="43"/>
    </location>
</feature>
<feature type="peptide" id="PRO_0000003185" description="Maximin-5">
    <location>
        <begin position="44"/>
        <end position="71"/>
    </location>
</feature>
<feature type="propeptide" id="PRO_0000003186" evidence="2">
    <location>
        <begin position="74"/>
        <end position="124"/>
    </location>
</feature>
<feature type="peptide" id="PRO_0000003187" description="Maximin-H4">
    <location>
        <begin position="125"/>
        <end position="144"/>
    </location>
</feature>
<feature type="modified residue" description="Leucine amide" evidence="2 3">
    <location>
        <position position="144"/>
    </location>
</feature>
<accession>Q58T60</accession>
<reference key="1">
    <citation type="journal article" date="2005" name="Eur. J. Immunol.">
        <title>Variety of antimicrobial peptides in the Bombina maxima toad and evidence of their rapid diversification.</title>
        <authorList>
            <person name="Lee W.-H."/>
            <person name="Li Y."/>
            <person name="Lai R."/>
            <person name="Li S."/>
            <person name="Zhang Y."/>
            <person name="Wang W."/>
        </authorList>
    </citation>
    <scope>NUCLEOTIDE SEQUENCE [MRNA]</scope>
    <scope>PROTEIN SEQUENCE OF 45-71 AND 125-144</scope>
    <scope>AMIDATION AT LEU-144</scope>
    <scope>MASS SPECTROMETRY</scope>
    <source>
        <tissue>Skin</tissue>
    </source>
</reference>
<reference key="2">
    <citation type="submission" date="2001-07" db="UniProtKB">
        <title>Isolation and structural characterisation of antimicrobial peptides from the venom of the Chinese large-webbed bell toad (Bombina maxima).</title>
        <authorList>
            <person name="Chen T.B."/>
            <person name="McClean S."/>
            <person name="Orr D.F."/>
            <person name="Bjourson A.J."/>
            <person name="Rao P.F."/>
            <person name="Shaw C."/>
        </authorList>
    </citation>
    <scope>PROTEIN SEQUENCE OF 44-70</scope>
    <scope>FUNCTION OF MAXIMIN-5</scope>
    <scope>SUBCELLULAR LOCATION</scope>
    <scope>TISSUE SPECIFICITY</scope>
    <source>
        <tissue>Skin secretion</tissue>
    </source>
</reference>
<reference key="3">
    <citation type="journal article" date="2002" name="Peptides">
        <title>Antimicrobial peptides from skin secretions of Chinese red belly toad Bombina maxima.</title>
        <authorList>
            <person name="Lai R."/>
            <person name="Zheng Y.-T."/>
            <person name="Shen J.-H."/>
            <person name="Liu G.-J."/>
            <person name="Liu H."/>
            <person name="Lee W.-H."/>
            <person name="Tang S.-Z."/>
            <person name="Zhang Y."/>
        </authorList>
    </citation>
    <scope>PROTEIN SEQUENCE OF 44-71 AND 125-144</scope>
    <scope>AMIDATION AT LEU-144</scope>
    <scope>FUNCTION OF MAXIMIN-5 AND MAXIMIN-H4</scope>
    <scope>MASS SPECTROMETRY</scope>
    <source>
        <tissue>Skin</tissue>
        <tissue>Skin secretion</tissue>
    </source>
</reference>